<feature type="chain" id="PRO_0000255903" description="Probable chorismate pyruvate-lyase">
    <location>
        <begin position="1"/>
        <end position="198"/>
    </location>
</feature>
<feature type="binding site" evidence="1">
    <location>
        <position position="73"/>
    </location>
    <ligand>
        <name>substrate</name>
    </ligand>
</feature>
<feature type="binding site" evidence="1">
    <location>
        <position position="111"/>
    </location>
    <ligand>
        <name>substrate</name>
    </ligand>
</feature>
<feature type="binding site" evidence="1">
    <location>
        <position position="172"/>
    </location>
    <ligand>
        <name>substrate</name>
    </ligand>
</feature>
<sequence length="198" mass="21842">MRFDGAQAGWRETPRPGCTLDQRDWLTRGGSLTAHLARLGRVNVRVTREAVDRPWFDEPDALASSPRAPMWVREVILSVDGMPYVAAHSIAPLAASKGVWQAMRRLRTRPLAELLYSDPQVERSALVSRRVIAGHPLYALASHALLGARAPHAFVARRSVFQRHGKPLMVTECMLPALWRHLDAHGDGPRSVGSHGGA</sequence>
<evidence type="ECO:0000255" key="1">
    <source>
        <dbReference type="HAMAP-Rule" id="MF_01632"/>
    </source>
</evidence>
<comment type="function">
    <text evidence="1">Removes the pyruvyl group from chorismate, with concomitant aromatization of the ring, to provide 4-hydroxybenzoate (4HB) for the ubiquinone pathway.</text>
</comment>
<comment type="catalytic activity">
    <reaction evidence="1">
        <text>chorismate = 4-hydroxybenzoate + pyruvate</text>
        <dbReference type="Rhea" id="RHEA:16505"/>
        <dbReference type="ChEBI" id="CHEBI:15361"/>
        <dbReference type="ChEBI" id="CHEBI:17879"/>
        <dbReference type="ChEBI" id="CHEBI:29748"/>
        <dbReference type="EC" id="4.1.3.40"/>
    </reaction>
</comment>
<comment type="pathway">
    <text evidence="1">Cofactor biosynthesis; ubiquinone biosynthesis.</text>
</comment>
<comment type="subcellular location">
    <subcellularLocation>
        <location evidence="1">Cytoplasm</location>
    </subcellularLocation>
</comment>
<comment type="similarity">
    <text evidence="1">Belongs to the UbiC family.</text>
</comment>
<protein>
    <recommendedName>
        <fullName evidence="1">Probable chorismate pyruvate-lyase</fullName>
        <shortName evidence="1">CL</shortName>
        <shortName evidence="1">CPL</shortName>
        <ecNumber evidence="1">4.1.3.40</ecNumber>
    </recommendedName>
</protein>
<dbReference type="EC" id="4.1.3.40" evidence="1"/>
<dbReference type="EMBL" id="CP000378">
    <property type="protein sequence ID" value="ABF76637.1"/>
    <property type="molecule type" value="Genomic_DNA"/>
</dbReference>
<dbReference type="SMR" id="Q1BUR8"/>
<dbReference type="HOGENOM" id="CLU_096824_0_0_4"/>
<dbReference type="UniPathway" id="UPA00232"/>
<dbReference type="GO" id="GO:0005829">
    <property type="term" value="C:cytosol"/>
    <property type="evidence" value="ECO:0007669"/>
    <property type="project" value="TreeGrafter"/>
</dbReference>
<dbReference type="GO" id="GO:0008813">
    <property type="term" value="F:chorismate lyase activity"/>
    <property type="evidence" value="ECO:0007669"/>
    <property type="project" value="UniProtKB-UniRule"/>
</dbReference>
<dbReference type="GO" id="GO:0042866">
    <property type="term" value="P:pyruvate biosynthetic process"/>
    <property type="evidence" value="ECO:0007669"/>
    <property type="project" value="UniProtKB-UniRule"/>
</dbReference>
<dbReference type="GO" id="GO:0006744">
    <property type="term" value="P:ubiquinone biosynthetic process"/>
    <property type="evidence" value="ECO:0007669"/>
    <property type="project" value="UniProtKB-UniRule"/>
</dbReference>
<dbReference type="Gene3D" id="3.40.1410.10">
    <property type="entry name" value="Chorismate lyase-like"/>
    <property type="match status" value="1"/>
</dbReference>
<dbReference type="HAMAP" id="MF_01632">
    <property type="entry name" value="UbiC"/>
    <property type="match status" value="1"/>
</dbReference>
<dbReference type="InterPro" id="IPR007440">
    <property type="entry name" value="Chorismate--pyruvate_lyase"/>
</dbReference>
<dbReference type="InterPro" id="IPR028978">
    <property type="entry name" value="Chorismate_lyase_/UTRA_dom_sf"/>
</dbReference>
<dbReference type="PANTHER" id="PTHR38683">
    <property type="entry name" value="CHORISMATE PYRUVATE-LYASE"/>
    <property type="match status" value="1"/>
</dbReference>
<dbReference type="PANTHER" id="PTHR38683:SF1">
    <property type="entry name" value="CHORISMATE PYRUVATE-LYASE"/>
    <property type="match status" value="1"/>
</dbReference>
<dbReference type="Pfam" id="PF04345">
    <property type="entry name" value="Chor_lyase"/>
    <property type="match status" value="1"/>
</dbReference>
<dbReference type="SUPFAM" id="SSF64288">
    <property type="entry name" value="Chorismate lyase-like"/>
    <property type="match status" value="1"/>
</dbReference>
<keyword id="KW-0963">Cytoplasm</keyword>
<keyword id="KW-0456">Lyase</keyword>
<keyword id="KW-0670">Pyruvate</keyword>
<keyword id="KW-0831">Ubiquinone biosynthesis</keyword>
<reference key="1">
    <citation type="submission" date="2006-05" db="EMBL/GenBank/DDBJ databases">
        <title>Complete sequence of chromosome 1 of Burkholderia cenocepacia AU 1054.</title>
        <authorList>
            <consortium name="US DOE Joint Genome Institute"/>
            <person name="Copeland A."/>
            <person name="Lucas S."/>
            <person name="Lapidus A."/>
            <person name="Barry K."/>
            <person name="Detter J.C."/>
            <person name="Glavina del Rio T."/>
            <person name="Hammon N."/>
            <person name="Israni S."/>
            <person name="Dalin E."/>
            <person name="Tice H."/>
            <person name="Pitluck S."/>
            <person name="Chain P."/>
            <person name="Malfatti S."/>
            <person name="Shin M."/>
            <person name="Vergez L."/>
            <person name="Schmutz J."/>
            <person name="Larimer F."/>
            <person name="Land M."/>
            <person name="Hauser L."/>
            <person name="Kyrpides N."/>
            <person name="Lykidis A."/>
            <person name="LiPuma J.J."/>
            <person name="Konstantinidis K."/>
            <person name="Tiedje J.M."/>
            <person name="Richardson P."/>
        </authorList>
    </citation>
    <scope>NUCLEOTIDE SEQUENCE [LARGE SCALE GENOMIC DNA]</scope>
    <source>
        <strain>AU 1054</strain>
    </source>
</reference>
<accession>Q1BUR8</accession>
<organism>
    <name type="scientific">Burkholderia orbicola (strain AU 1054)</name>
    <dbReference type="NCBI Taxonomy" id="331271"/>
    <lineage>
        <taxon>Bacteria</taxon>
        <taxon>Pseudomonadati</taxon>
        <taxon>Pseudomonadota</taxon>
        <taxon>Betaproteobacteria</taxon>
        <taxon>Burkholderiales</taxon>
        <taxon>Burkholderiaceae</taxon>
        <taxon>Burkholderia</taxon>
        <taxon>Burkholderia cepacia complex</taxon>
        <taxon>Burkholderia orbicola</taxon>
    </lineage>
</organism>
<proteinExistence type="inferred from homology"/>
<gene>
    <name evidence="1" type="primary">ubiC</name>
    <name type="ordered locus">Bcen_1734</name>
</gene>
<name>UBIC_BURO1</name>